<reference key="1">
    <citation type="journal article" date="2009" name="BMC Genomics">
        <title>Complete genome sequence of the sugarcane nitrogen-fixing endophyte Gluconacetobacter diazotrophicus Pal5.</title>
        <authorList>
            <person name="Bertalan M."/>
            <person name="Albano R."/>
            <person name="de Padua V."/>
            <person name="Rouws L."/>
            <person name="Rojas C."/>
            <person name="Hemerly A."/>
            <person name="Teixeira K."/>
            <person name="Schwab S."/>
            <person name="Araujo J."/>
            <person name="Oliveira A."/>
            <person name="Franca L."/>
            <person name="Magalhaes V."/>
            <person name="Alqueres S."/>
            <person name="Cardoso A."/>
            <person name="Almeida W."/>
            <person name="Loureiro M.M."/>
            <person name="Nogueira E."/>
            <person name="Cidade D."/>
            <person name="Oliveira D."/>
            <person name="Simao T."/>
            <person name="Macedo J."/>
            <person name="Valadao A."/>
            <person name="Dreschsel M."/>
            <person name="Freitas F."/>
            <person name="Vidal M."/>
            <person name="Guedes H."/>
            <person name="Rodrigues E."/>
            <person name="Meneses C."/>
            <person name="Brioso P."/>
            <person name="Pozzer L."/>
            <person name="Figueiredo D."/>
            <person name="Montano H."/>
            <person name="Junior J."/>
            <person name="de Souza Filho G."/>
            <person name="Martin Quintana Flores V."/>
            <person name="Ferreira B."/>
            <person name="Branco A."/>
            <person name="Gonzalez P."/>
            <person name="Guillobel H."/>
            <person name="Lemos M."/>
            <person name="Seibel L."/>
            <person name="Macedo J."/>
            <person name="Alves-Ferreira M."/>
            <person name="Sachetto-Martins G."/>
            <person name="Coelho A."/>
            <person name="Santos E."/>
            <person name="Amaral G."/>
            <person name="Neves A."/>
            <person name="Pacheco A.B."/>
            <person name="Carvalho D."/>
            <person name="Lery L."/>
            <person name="Bisch P."/>
            <person name="Rossle S.C."/>
            <person name="Urmenyi T."/>
            <person name="Rael Pereira A."/>
            <person name="Silva R."/>
            <person name="Rondinelli E."/>
            <person name="von Kruger W."/>
            <person name="Martins O."/>
            <person name="Baldani J.I."/>
            <person name="Ferreira P.C."/>
        </authorList>
    </citation>
    <scope>NUCLEOTIDE SEQUENCE [LARGE SCALE GENOMIC DNA]</scope>
    <source>
        <strain>ATCC 49037 / DSM 5601 / CCUG 37298 / CIP 103539 / LMG 7603 / PAl5</strain>
    </source>
</reference>
<reference key="2">
    <citation type="journal article" date="2010" name="Stand. Genomic Sci.">
        <title>Two genome sequences of the same bacterial strain, Gluconacetobacter diazotrophicus PAl 5, suggest a new standard in genome sequence submission.</title>
        <authorList>
            <person name="Giongo A."/>
            <person name="Tyler H.L."/>
            <person name="Zipperer U.N."/>
            <person name="Triplett E.W."/>
        </authorList>
    </citation>
    <scope>NUCLEOTIDE SEQUENCE [LARGE SCALE GENOMIC DNA]</scope>
    <source>
        <strain>ATCC 49037 / DSM 5601 / CCUG 37298 / CIP 103539 / LMG 7603 / PAl5</strain>
    </source>
</reference>
<protein>
    <recommendedName>
        <fullName evidence="1">Large ribosomal subunit protein uL2</fullName>
    </recommendedName>
    <alternativeName>
        <fullName evidence="3">50S ribosomal protein L2</fullName>
    </alternativeName>
</protein>
<comment type="function">
    <text evidence="1">One of the primary rRNA binding proteins. Required for association of the 30S and 50S subunits to form the 70S ribosome, for tRNA binding and peptide bond formation. It has been suggested to have peptidyltransferase activity; this is somewhat controversial. Makes several contacts with the 16S rRNA in the 70S ribosome.</text>
</comment>
<comment type="subunit">
    <text evidence="1">Part of the 50S ribosomal subunit. Forms a bridge to the 30S subunit in the 70S ribosome.</text>
</comment>
<comment type="similarity">
    <text evidence="1">Belongs to the universal ribosomal protein uL2 family.</text>
</comment>
<dbReference type="EMBL" id="AM889285">
    <property type="protein sequence ID" value="CAP57344.1"/>
    <property type="molecule type" value="Genomic_DNA"/>
</dbReference>
<dbReference type="EMBL" id="CP001189">
    <property type="protein sequence ID" value="ACI52699.1"/>
    <property type="molecule type" value="Genomic_DNA"/>
</dbReference>
<dbReference type="RefSeq" id="WP_012227952.1">
    <property type="nucleotide sequence ID" value="NC_010125.1"/>
</dbReference>
<dbReference type="SMR" id="A9H3Q5"/>
<dbReference type="STRING" id="272568.GDI3401"/>
<dbReference type="KEGG" id="gdi:GDI3401"/>
<dbReference type="KEGG" id="gdj:Gdia_2969"/>
<dbReference type="eggNOG" id="COG0090">
    <property type="taxonomic scope" value="Bacteria"/>
</dbReference>
<dbReference type="HOGENOM" id="CLU_036235_2_1_5"/>
<dbReference type="OrthoDB" id="9778722at2"/>
<dbReference type="Proteomes" id="UP000001176">
    <property type="component" value="Chromosome"/>
</dbReference>
<dbReference type="GO" id="GO:0015934">
    <property type="term" value="C:large ribosomal subunit"/>
    <property type="evidence" value="ECO:0007669"/>
    <property type="project" value="InterPro"/>
</dbReference>
<dbReference type="GO" id="GO:0019843">
    <property type="term" value="F:rRNA binding"/>
    <property type="evidence" value="ECO:0007669"/>
    <property type="project" value="UniProtKB-UniRule"/>
</dbReference>
<dbReference type="GO" id="GO:0003735">
    <property type="term" value="F:structural constituent of ribosome"/>
    <property type="evidence" value="ECO:0007669"/>
    <property type="project" value="InterPro"/>
</dbReference>
<dbReference type="GO" id="GO:0016740">
    <property type="term" value="F:transferase activity"/>
    <property type="evidence" value="ECO:0007669"/>
    <property type="project" value="InterPro"/>
</dbReference>
<dbReference type="GO" id="GO:0002181">
    <property type="term" value="P:cytoplasmic translation"/>
    <property type="evidence" value="ECO:0007669"/>
    <property type="project" value="TreeGrafter"/>
</dbReference>
<dbReference type="FunFam" id="2.30.30.30:FF:000001">
    <property type="entry name" value="50S ribosomal protein L2"/>
    <property type="match status" value="1"/>
</dbReference>
<dbReference type="FunFam" id="4.10.950.10:FF:000001">
    <property type="entry name" value="50S ribosomal protein L2"/>
    <property type="match status" value="1"/>
</dbReference>
<dbReference type="Gene3D" id="2.30.30.30">
    <property type="match status" value="1"/>
</dbReference>
<dbReference type="Gene3D" id="2.40.50.140">
    <property type="entry name" value="Nucleic acid-binding proteins"/>
    <property type="match status" value="1"/>
</dbReference>
<dbReference type="Gene3D" id="4.10.950.10">
    <property type="entry name" value="Ribosomal protein L2, domain 3"/>
    <property type="match status" value="1"/>
</dbReference>
<dbReference type="HAMAP" id="MF_01320_B">
    <property type="entry name" value="Ribosomal_uL2_B"/>
    <property type="match status" value="1"/>
</dbReference>
<dbReference type="InterPro" id="IPR012340">
    <property type="entry name" value="NA-bd_OB-fold"/>
</dbReference>
<dbReference type="InterPro" id="IPR014722">
    <property type="entry name" value="Rib_uL2_dom2"/>
</dbReference>
<dbReference type="InterPro" id="IPR002171">
    <property type="entry name" value="Ribosomal_uL2"/>
</dbReference>
<dbReference type="InterPro" id="IPR005880">
    <property type="entry name" value="Ribosomal_uL2_bac/org-type"/>
</dbReference>
<dbReference type="InterPro" id="IPR022669">
    <property type="entry name" value="Ribosomal_uL2_C"/>
</dbReference>
<dbReference type="InterPro" id="IPR022671">
    <property type="entry name" value="Ribosomal_uL2_CS"/>
</dbReference>
<dbReference type="InterPro" id="IPR014726">
    <property type="entry name" value="Ribosomal_uL2_dom3"/>
</dbReference>
<dbReference type="InterPro" id="IPR022666">
    <property type="entry name" value="Ribosomal_uL2_RNA-bd_dom"/>
</dbReference>
<dbReference type="InterPro" id="IPR008991">
    <property type="entry name" value="Translation_prot_SH3-like_sf"/>
</dbReference>
<dbReference type="NCBIfam" id="TIGR01171">
    <property type="entry name" value="rplB_bact"/>
    <property type="match status" value="1"/>
</dbReference>
<dbReference type="PANTHER" id="PTHR13691:SF5">
    <property type="entry name" value="LARGE RIBOSOMAL SUBUNIT PROTEIN UL2M"/>
    <property type="match status" value="1"/>
</dbReference>
<dbReference type="PANTHER" id="PTHR13691">
    <property type="entry name" value="RIBOSOMAL PROTEIN L2"/>
    <property type="match status" value="1"/>
</dbReference>
<dbReference type="Pfam" id="PF00181">
    <property type="entry name" value="Ribosomal_L2"/>
    <property type="match status" value="1"/>
</dbReference>
<dbReference type="Pfam" id="PF03947">
    <property type="entry name" value="Ribosomal_L2_C"/>
    <property type="match status" value="1"/>
</dbReference>
<dbReference type="PIRSF" id="PIRSF002158">
    <property type="entry name" value="Ribosomal_L2"/>
    <property type="match status" value="1"/>
</dbReference>
<dbReference type="SMART" id="SM01383">
    <property type="entry name" value="Ribosomal_L2"/>
    <property type="match status" value="1"/>
</dbReference>
<dbReference type="SMART" id="SM01382">
    <property type="entry name" value="Ribosomal_L2_C"/>
    <property type="match status" value="1"/>
</dbReference>
<dbReference type="SUPFAM" id="SSF50249">
    <property type="entry name" value="Nucleic acid-binding proteins"/>
    <property type="match status" value="1"/>
</dbReference>
<dbReference type="SUPFAM" id="SSF50104">
    <property type="entry name" value="Translation proteins SH3-like domain"/>
    <property type="match status" value="1"/>
</dbReference>
<dbReference type="PROSITE" id="PS00467">
    <property type="entry name" value="RIBOSOMAL_L2"/>
    <property type="match status" value="1"/>
</dbReference>
<name>RL2_GLUDA</name>
<accession>A9H3Q5</accession>
<accession>B5ZIG6</accession>
<keyword id="KW-1185">Reference proteome</keyword>
<keyword id="KW-0687">Ribonucleoprotein</keyword>
<keyword id="KW-0689">Ribosomal protein</keyword>
<keyword id="KW-0694">RNA-binding</keyword>
<keyword id="KW-0699">rRNA-binding</keyword>
<organism>
    <name type="scientific">Gluconacetobacter diazotrophicus (strain ATCC 49037 / DSM 5601 / CCUG 37298 / CIP 103539 / LMG 7603 / PAl5)</name>
    <dbReference type="NCBI Taxonomy" id="272568"/>
    <lineage>
        <taxon>Bacteria</taxon>
        <taxon>Pseudomonadati</taxon>
        <taxon>Pseudomonadota</taxon>
        <taxon>Alphaproteobacteria</taxon>
        <taxon>Acetobacterales</taxon>
        <taxon>Acetobacteraceae</taxon>
        <taxon>Gluconacetobacter</taxon>
    </lineage>
</organism>
<gene>
    <name evidence="1" type="primary">rplB</name>
    <name type="ordered locus">GDI3401</name>
    <name type="ordered locus">Gdia_2969</name>
</gene>
<evidence type="ECO:0000255" key="1">
    <source>
        <dbReference type="HAMAP-Rule" id="MF_01320"/>
    </source>
</evidence>
<evidence type="ECO:0000256" key="2">
    <source>
        <dbReference type="SAM" id="MobiDB-lite"/>
    </source>
</evidence>
<evidence type="ECO:0000305" key="3"/>
<sequence length="276" mass="30262">MALKHFNPVTPSLRGTVLIDRKELWKGKPVKGLTEGKNKSGGRNNHGRTTSRFIGGGHKQSYRYVDFKRRKFDVVGTVERLEYDPNRTAFIALVKYEDGELAYILAPQRLKAGDQVVAGARVDIKPGNAMPLSAIPVGTIVHNIELKQGAGGKMARSAGTYAQLVGKDSGYAQIKLQSGELRVVRGECMATIGAVSNPDNMNQHMGKAGRSRWLGRRPHNRGVVMNPVDHPHGGGEGRTSGGRHPVTPWGKPTKGYKTRVNKRTDSLIIRRRKTGK</sequence>
<feature type="chain" id="PRO_1000086333" description="Large ribosomal subunit protein uL2">
    <location>
        <begin position="1"/>
        <end position="276"/>
    </location>
</feature>
<feature type="region of interest" description="Disordered" evidence="2">
    <location>
        <begin position="30"/>
        <end position="52"/>
    </location>
</feature>
<feature type="region of interest" description="Disordered" evidence="2">
    <location>
        <begin position="224"/>
        <end position="257"/>
    </location>
</feature>
<feature type="compositionally biased region" description="Polar residues" evidence="2">
    <location>
        <begin position="41"/>
        <end position="52"/>
    </location>
</feature>
<proteinExistence type="inferred from homology"/>